<feature type="chain" id="PRO_0000184202" description="Putative HTH-type transcriptional regulator in exeN 3'region">
    <location>
        <begin position="1" status="less than"/>
        <end position="196"/>
    </location>
</feature>
<feature type="domain" description="HTH luxR-type" evidence="1">
    <location>
        <begin position="120"/>
        <end position="185"/>
    </location>
</feature>
<feature type="DNA-binding region" description="H-T-H motif" evidence="1">
    <location>
        <begin position="144"/>
        <end position="163"/>
    </location>
</feature>
<feature type="non-terminal residue">
    <location>
        <position position="1"/>
    </location>
</feature>
<name>YEXN_AERSA</name>
<organism>
    <name type="scientific">Aeromonas salmonicida</name>
    <dbReference type="NCBI Taxonomy" id="645"/>
    <lineage>
        <taxon>Bacteria</taxon>
        <taxon>Pseudomonadati</taxon>
        <taxon>Pseudomonadota</taxon>
        <taxon>Gammaproteobacteria</taxon>
        <taxon>Aeromonadales</taxon>
        <taxon>Aeromonadaceae</taxon>
        <taxon>Aeromonas</taxon>
    </lineage>
</organism>
<reference key="1">
    <citation type="journal article" date="1995" name="Gene">
        <title>Cloning and study of the genetic organization of the exe gene cluster of Aeromonas salmonicida.</title>
        <authorList>
            <person name="Karlyshev A.V."/>
            <person name="Macintyre S."/>
        </authorList>
    </citation>
    <scope>NUCLEOTIDE SEQUENCE [GENOMIC DNA]</scope>
    <source>
        <strain>ATCC 33658 / DSM 19634 / JCM 7874 / NCIMB 1102 / NCTC 12959</strain>
    </source>
</reference>
<dbReference type="EMBL" id="X80506">
    <property type="protein sequence ID" value="CAA56670.1"/>
    <property type="status" value="ALT_INIT"/>
    <property type="molecule type" value="Genomic_DNA"/>
</dbReference>
<dbReference type="PIR" id="I39675">
    <property type="entry name" value="S46971"/>
</dbReference>
<dbReference type="SMR" id="P45785"/>
<dbReference type="STRING" id="1233098.GCA_000315855_00784"/>
<dbReference type="GO" id="GO:0003677">
    <property type="term" value="F:DNA binding"/>
    <property type="evidence" value="ECO:0007669"/>
    <property type="project" value="UniProtKB-KW"/>
</dbReference>
<dbReference type="GO" id="GO:0006355">
    <property type="term" value="P:regulation of DNA-templated transcription"/>
    <property type="evidence" value="ECO:0007669"/>
    <property type="project" value="InterPro"/>
</dbReference>
<dbReference type="CDD" id="cd06170">
    <property type="entry name" value="LuxR_C_like"/>
    <property type="match status" value="1"/>
</dbReference>
<dbReference type="Gene3D" id="1.10.10.10">
    <property type="entry name" value="Winged helix-like DNA-binding domain superfamily/Winged helix DNA-binding domain"/>
    <property type="match status" value="1"/>
</dbReference>
<dbReference type="InterPro" id="IPR016032">
    <property type="entry name" value="Sig_transdc_resp-reg_C-effctor"/>
</dbReference>
<dbReference type="InterPro" id="IPR000792">
    <property type="entry name" value="Tscrpt_reg_LuxR_C"/>
</dbReference>
<dbReference type="InterPro" id="IPR036388">
    <property type="entry name" value="WH-like_DNA-bd_sf"/>
</dbReference>
<dbReference type="PANTHER" id="PTHR44688">
    <property type="entry name" value="DNA-BINDING TRANSCRIPTIONAL ACTIVATOR DEVR_DOSR"/>
    <property type="match status" value="1"/>
</dbReference>
<dbReference type="PANTHER" id="PTHR44688:SF16">
    <property type="entry name" value="DNA-BINDING TRANSCRIPTIONAL ACTIVATOR DEVR_DOSR"/>
    <property type="match status" value="1"/>
</dbReference>
<dbReference type="Pfam" id="PF00196">
    <property type="entry name" value="GerE"/>
    <property type="match status" value="1"/>
</dbReference>
<dbReference type="PRINTS" id="PR00038">
    <property type="entry name" value="HTHLUXR"/>
</dbReference>
<dbReference type="SMART" id="SM00421">
    <property type="entry name" value="HTH_LUXR"/>
    <property type="match status" value="1"/>
</dbReference>
<dbReference type="SUPFAM" id="SSF46894">
    <property type="entry name" value="C-terminal effector domain of the bipartite response regulators"/>
    <property type="match status" value="1"/>
</dbReference>
<dbReference type="PROSITE" id="PS00622">
    <property type="entry name" value="HTH_LUXR_1"/>
    <property type="match status" value="1"/>
</dbReference>
<dbReference type="PROSITE" id="PS50043">
    <property type="entry name" value="HTH_LUXR_2"/>
    <property type="match status" value="1"/>
</dbReference>
<proteinExistence type="predicted"/>
<accession>P45785</accession>
<evidence type="ECO:0000255" key="1">
    <source>
        <dbReference type="PROSITE-ProRule" id="PRU00411"/>
    </source>
</evidence>
<evidence type="ECO:0000305" key="2"/>
<sequence length="196" mass="21743">DPFMQALEQGLPAGVWTLAQVSQGRLDPEYRHHFYQATGWQEEVGLILPVRDGLTLMLFLGRLDKRSTLSRDELARLEGVFPLVHSLCRQQWQQSQPLLAQSTAQPDSTSLKSAVEQAMASVGGDRLTRRERQVAELLLQGLDTEAIAAALGIGNGTVKNHRKHLYGKLRLGSRAELFNLFLNHLITAPVGDIQTP</sequence>
<keyword id="KW-0238">DNA-binding</keyword>
<keyword id="KW-0804">Transcription</keyword>
<keyword id="KW-0805">Transcription regulation</keyword>
<protein>
    <recommendedName>
        <fullName evidence="2">Putative HTH-type transcriptional regulator in exeN 3'region</fullName>
    </recommendedName>
    <alternativeName>
        <fullName>ORF2</fullName>
    </alternativeName>
</protein>
<comment type="sequence caution" evidence="2">
    <conflict type="erroneous initiation">
        <sequence resource="EMBL-CDS" id="CAA56670"/>
    </conflict>
    <text>Truncated N-terminus.</text>
</comment>